<accession>Q95LF7</accession>
<organism>
    <name type="scientific">Saguinus imperator</name>
    <name type="common">Emperor tamarin</name>
    <dbReference type="NCBI Taxonomy" id="9491"/>
    <lineage>
        <taxon>Eukaryota</taxon>
        <taxon>Metazoa</taxon>
        <taxon>Chordata</taxon>
        <taxon>Craniata</taxon>
        <taxon>Vertebrata</taxon>
        <taxon>Euteleostomi</taxon>
        <taxon>Mammalia</taxon>
        <taxon>Eutheria</taxon>
        <taxon>Euarchontoglires</taxon>
        <taxon>Primates</taxon>
        <taxon>Haplorrhini</taxon>
        <taxon>Platyrrhini</taxon>
        <taxon>Cebidae</taxon>
        <taxon>Callitrichinae</taxon>
        <taxon>Saguinus</taxon>
    </lineage>
</organism>
<sequence length="336" mass="35853">MGNCLHQAELSPSTENSSQLNLEDLWNFSYDGNDSFPEIDYDASLEAAAPCHSCNLLDDSSLPFFILASVLGILASSTVLFLLFRPLFRWQLCPGWPVLAQLAVGSTLFSIVVPILAPGLGNTRSSAPCSLGYCVWYGSAFAQALLLGCHASLGPKLGAGQVPGLTLGLSVGLWGAAALLTLPITLASDASDGLCTPIYSTELKALQATHTVACFAIFVLLPLGLFGAKGLKKVLGMGPGPWMNILWVWFIFWWPHGVVLGLDFLVRSKLLLLPTCLAQQVLDLLLNLAEALAIVHCVATPLLLALFCHQATRTLVPSLPLPERWSSPVDTLGSKS</sequence>
<feature type="chain" id="PRO_0000152590" description="Atypical chemokine receptor 1">
    <location>
        <begin position="1"/>
        <end position="336"/>
    </location>
</feature>
<feature type="topological domain" description="Extracellular" evidence="2">
    <location>
        <begin position="1"/>
        <end position="63"/>
    </location>
</feature>
<feature type="transmembrane region" description="Helical; Name=1" evidence="2">
    <location>
        <begin position="64"/>
        <end position="84"/>
    </location>
</feature>
<feature type="topological domain" description="Cytoplasmic" evidence="2">
    <location>
        <begin position="85"/>
        <end position="95"/>
    </location>
</feature>
<feature type="transmembrane region" description="Helical; Name=2" evidence="2">
    <location>
        <begin position="96"/>
        <end position="116"/>
    </location>
</feature>
<feature type="topological domain" description="Extracellular" evidence="2">
    <location>
        <begin position="117"/>
        <end position="129"/>
    </location>
</feature>
<feature type="transmembrane region" description="Helical; Name=3" evidence="2">
    <location>
        <begin position="130"/>
        <end position="153"/>
    </location>
</feature>
<feature type="topological domain" description="Cytoplasmic" evidence="2">
    <location>
        <begin position="154"/>
        <end position="166"/>
    </location>
</feature>
<feature type="transmembrane region" description="Helical; Name=4" evidence="2">
    <location>
        <begin position="167"/>
        <end position="187"/>
    </location>
</feature>
<feature type="topological domain" description="Extracellular" evidence="2">
    <location>
        <begin position="188"/>
        <end position="207"/>
    </location>
</feature>
<feature type="transmembrane region" description="Helical; Name=5" evidence="2">
    <location>
        <begin position="208"/>
        <end position="228"/>
    </location>
</feature>
<feature type="topological domain" description="Cytoplasmic" evidence="2">
    <location>
        <begin position="229"/>
        <end position="244"/>
    </location>
</feature>
<feature type="transmembrane region" description="Helical; Name=6" evidence="2">
    <location>
        <begin position="245"/>
        <end position="265"/>
    </location>
</feature>
<feature type="topological domain" description="Extracellular" evidence="2">
    <location>
        <begin position="266"/>
        <end position="287"/>
    </location>
</feature>
<feature type="transmembrane region" description="Helical; Name=7" evidence="2">
    <location>
        <begin position="288"/>
        <end position="308"/>
    </location>
</feature>
<feature type="topological domain" description="Cytoplasmic" evidence="2">
    <location>
        <begin position="309"/>
        <end position="336"/>
    </location>
</feature>
<feature type="glycosylation site" description="N-linked (GlcNAc...) asparagine" evidence="2">
    <location>
        <position position="16"/>
    </location>
</feature>
<feature type="glycosylation site" description="N-linked (GlcNAc...) asparagine" evidence="2">
    <location>
        <position position="27"/>
    </location>
</feature>
<feature type="glycosylation site" description="N-linked (GlcNAc...) asparagine" evidence="2">
    <location>
        <position position="33"/>
    </location>
</feature>
<feature type="disulfide bond" evidence="1">
    <location>
        <begin position="51"/>
        <end position="276"/>
    </location>
</feature>
<feature type="disulfide bond" evidence="1">
    <location>
        <begin position="129"/>
        <end position="195"/>
    </location>
</feature>
<evidence type="ECO:0000250" key="1"/>
<evidence type="ECO:0000255" key="2"/>
<evidence type="ECO:0000305" key="3"/>
<comment type="function">
    <text evidence="1">Atypical chemokine receptor that controls chemokine levels and localization via high-affinity chemokine binding that is uncoupled from classic ligand-driven signal transduction cascades, resulting instead in chemokine sequestration, degradation, or transcytosis. Also known as interceptor (internalizing receptor) or chemokine-scavenging receptor or chemokine decoy receptor. Has a promiscuous chemokine-binding profile, interacting with inflammatory chemokines of both the CXC and the CC subfamilies but not with homeostatic chemokines. Acts as a receptor for chemokines including CCL2, CCL5, CCL7, CCL11, CCL13, CCL14, CCL17, CXCL5, CXCL6, IL8/CXCL8, CXCL11, GRO, RANTES, MCP-1 and TARC. May regulate chemokine bioavailability and, consequently, leukocyte recruitment through two distinct mechanisms: when expressed in endothelial cells, it sustains the abluminal to luminal transcytosis of tissue-derived chemokines and their subsequent presentation to circulating leukocytes; when expressed in erythrocytes, serves as blood reservoir of cognate chemokines but also as a chemokine sink, buffering potential surges in plasma chemokine levels (By similarity).</text>
</comment>
<comment type="subcellular location">
    <subcellularLocation>
        <location evidence="1">Early endosome</location>
    </subcellularLocation>
    <subcellularLocation>
        <location evidence="1">Recycling endosome</location>
    </subcellularLocation>
    <subcellularLocation>
        <location>Membrane</location>
        <topology>Multi-pass membrane protein</topology>
    </subcellularLocation>
    <text evidence="1">Predominantly localizes to endocytic vesicles, and upon stimulation by the ligand is internalized via caveolae. Once internalized, the ligand dissociates from the receptor, and is targeted to degradation while the receptor is recycled back to the cell membrane (By similarity).</text>
</comment>
<comment type="similarity">
    <text evidence="3">Belongs to the G-protein coupled receptor 1 family. Atypical chemokine receptor subfamily.</text>
</comment>
<reference key="1">
    <citation type="journal article" date="2004" name="Immunogenetics">
        <title>Sequence, evolution and ligand binding properties of mammalian Duffy antigen/receptor for chemokines.</title>
        <authorList>
            <person name="Tournamille C."/>
            <person name="Blancher A."/>
            <person name="Le Van Kim C."/>
            <person name="Gane P."/>
            <person name="Apoil P.-A."/>
            <person name="Nakamoto W."/>
            <person name="Cartron J.-P."/>
            <person name="Colin Y."/>
        </authorList>
    </citation>
    <scope>NUCLEOTIDE SEQUENCE [GENOMIC DNA]</scope>
</reference>
<proteinExistence type="inferred from homology"/>
<keyword id="KW-1015">Disulfide bond</keyword>
<keyword id="KW-0967">Endosome</keyword>
<keyword id="KW-0297">G-protein coupled receptor</keyword>
<keyword id="KW-0325">Glycoprotein</keyword>
<keyword id="KW-0472">Membrane</keyword>
<keyword id="KW-0675">Receptor</keyword>
<keyword id="KW-0807">Transducer</keyword>
<keyword id="KW-0812">Transmembrane</keyword>
<keyword id="KW-1133">Transmembrane helix</keyword>
<dbReference type="EMBL" id="AF311916">
    <property type="protein sequence ID" value="AAL09451.1"/>
    <property type="molecule type" value="Genomic_DNA"/>
</dbReference>
<dbReference type="SMR" id="Q95LF7"/>
<dbReference type="GlyCosmos" id="Q95LF7">
    <property type="glycosylation" value="3 sites, No reported glycans"/>
</dbReference>
<dbReference type="GO" id="GO:0005769">
    <property type="term" value="C:early endosome"/>
    <property type="evidence" value="ECO:0007669"/>
    <property type="project" value="UniProtKB-SubCell"/>
</dbReference>
<dbReference type="GO" id="GO:0016020">
    <property type="term" value="C:membrane"/>
    <property type="evidence" value="ECO:0007669"/>
    <property type="project" value="UniProtKB-SubCell"/>
</dbReference>
<dbReference type="GO" id="GO:0055037">
    <property type="term" value="C:recycling endosome"/>
    <property type="evidence" value="ECO:0007669"/>
    <property type="project" value="UniProtKB-SubCell"/>
</dbReference>
<dbReference type="GO" id="GO:0019957">
    <property type="term" value="F:C-C chemokine binding"/>
    <property type="evidence" value="ECO:0007669"/>
    <property type="project" value="TreeGrafter"/>
</dbReference>
<dbReference type="GO" id="GO:0004930">
    <property type="term" value="F:G protein-coupled receptor activity"/>
    <property type="evidence" value="ECO:0007669"/>
    <property type="project" value="UniProtKB-KW"/>
</dbReference>
<dbReference type="GO" id="GO:0070098">
    <property type="term" value="P:chemokine-mediated signaling pathway"/>
    <property type="evidence" value="ECO:0007669"/>
    <property type="project" value="InterPro"/>
</dbReference>
<dbReference type="GO" id="GO:0006954">
    <property type="term" value="P:inflammatory response"/>
    <property type="evidence" value="ECO:0007669"/>
    <property type="project" value="InterPro"/>
</dbReference>
<dbReference type="GO" id="GO:0032642">
    <property type="term" value="P:regulation of chemokine production"/>
    <property type="evidence" value="ECO:0007669"/>
    <property type="project" value="TreeGrafter"/>
</dbReference>
<dbReference type="CDD" id="cd15010">
    <property type="entry name" value="7tmA_ACKR1_DARC"/>
    <property type="match status" value="1"/>
</dbReference>
<dbReference type="FunFam" id="1.20.1070.10:FF:000266">
    <property type="entry name" value="Atypical chemokine receptor 1"/>
    <property type="match status" value="1"/>
</dbReference>
<dbReference type="Gene3D" id="1.20.1070.10">
    <property type="entry name" value="Rhodopsin 7-helix transmembrane proteins"/>
    <property type="match status" value="1"/>
</dbReference>
<dbReference type="InterPro" id="IPR005384">
    <property type="entry name" value="Duffy_chemokine_rcpt"/>
</dbReference>
<dbReference type="PANTHER" id="PTHR14181:SF1">
    <property type="entry name" value="ATYPICAL CHEMOKINE RECEPTOR 1"/>
    <property type="match status" value="1"/>
</dbReference>
<dbReference type="PANTHER" id="PTHR14181">
    <property type="entry name" value="DUFFY ANTIGEN/CHEMOKINE RECEPTOR"/>
    <property type="match status" value="1"/>
</dbReference>
<dbReference type="PRINTS" id="PR01559">
    <property type="entry name" value="DUFFYANTIGEN"/>
</dbReference>
<name>ACKR1_SAGIM</name>
<protein>
    <recommendedName>
        <fullName>Atypical chemokine receptor 1</fullName>
    </recommendedName>
    <alternativeName>
        <fullName>Duffy antigen/chemokine receptor</fullName>
    </alternativeName>
    <cdAntigenName>CD234</cdAntigenName>
</protein>
<gene>
    <name type="primary">ACKR1</name>
    <name type="synonym">DARC</name>
    <name type="synonym">FY</name>
</gene>